<accession>P47098</accession>
<accession>D6VWJ9</accession>
<accession>P87194</accession>
<organism>
    <name type="scientific">Saccharomyces cerevisiae (strain ATCC 204508 / S288c)</name>
    <name type="common">Baker's yeast</name>
    <dbReference type="NCBI Taxonomy" id="559292"/>
    <lineage>
        <taxon>Eukaryota</taxon>
        <taxon>Fungi</taxon>
        <taxon>Dikarya</taxon>
        <taxon>Ascomycota</taxon>
        <taxon>Saccharomycotina</taxon>
        <taxon>Saccharomycetes</taxon>
        <taxon>Saccharomycetales</taxon>
        <taxon>Saccharomycetaceae</taxon>
        <taxon>Saccharomyces</taxon>
    </lineage>
</organism>
<feature type="chain" id="PRO_0000199563" description="Transposon Ty1-JR1 Gag-Pol polyprotein">
    <location>
        <begin position="1"/>
        <end position="1755"/>
    </location>
</feature>
<feature type="chain" id="PRO_0000279082" description="Capsid protein" evidence="1">
    <location>
        <begin position="1"/>
        <end position="401"/>
    </location>
</feature>
<feature type="chain" id="PRO_0000279083" description="Ty1 protease" evidence="1">
    <location>
        <begin position="402"/>
        <end position="582"/>
    </location>
</feature>
<feature type="chain" id="PRO_0000279084" description="Integrase" evidence="1">
    <location>
        <begin position="583"/>
        <end position="1217"/>
    </location>
</feature>
<feature type="chain" id="PRO_0000279085" description="Reverse transcriptase/ribonuclease H" evidence="1">
    <location>
        <begin position="1218"/>
        <end position="1755"/>
    </location>
</feature>
<feature type="domain" description="Integrase catalytic" evidence="3">
    <location>
        <begin position="660"/>
        <end position="835"/>
    </location>
</feature>
<feature type="domain" description="Reverse transcriptase Ty1/copia-type">
    <location>
        <begin position="1338"/>
        <end position="1476"/>
    </location>
</feature>
<feature type="domain" description="RNase H Ty1/copia-type">
    <location>
        <begin position="1610"/>
        <end position="1752"/>
    </location>
</feature>
<feature type="region of interest" description="Disordered" evidence="5">
    <location>
        <begin position="1"/>
        <end position="93"/>
    </location>
</feature>
<feature type="region of interest" description="Disordered" evidence="5">
    <location>
        <begin position="126"/>
        <end position="173"/>
    </location>
</feature>
<feature type="region of interest" description="RNA-binding" evidence="1">
    <location>
        <begin position="299"/>
        <end position="401"/>
    </location>
</feature>
<feature type="region of interest" description="Disordered" evidence="5">
    <location>
        <begin position="352"/>
        <end position="421"/>
    </location>
</feature>
<feature type="region of interest" description="Integrase-type zinc finger-like">
    <location>
        <begin position="583"/>
        <end position="640"/>
    </location>
</feature>
<feature type="region of interest" description="Disordered" evidence="5">
    <location>
        <begin position="956"/>
        <end position="1087"/>
    </location>
</feature>
<feature type="region of interest" description="Disordered" evidence="5">
    <location>
        <begin position="1092"/>
        <end position="1111"/>
    </location>
</feature>
<feature type="region of interest" description="Disordered" evidence="5">
    <location>
        <begin position="1130"/>
        <end position="1186"/>
    </location>
</feature>
<feature type="short sequence motif" description="Bipartite nuclear localization signal" evidence="1">
    <location>
        <begin position="1178"/>
        <end position="1212"/>
    </location>
</feature>
<feature type="compositionally biased region" description="Low complexity" evidence="5">
    <location>
        <begin position="1"/>
        <end position="16"/>
    </location>
</feature>
<feature type="compositionally biased region" description="Polar residues" evidence="5">
    <location>
        <begin position="48"/>
        <end position="60"/>
    </location>
</feature>
<feature type="compositionally biased region" description="Polar residues" evidence="5">
    <location>
        <begin position="127"/>
        <end position="152"/>
    </location>
</feature>
<feature type="compositionally biased region" description="Low complexity" evidence="5">
    <location>
        <begin position="153"/>
        <end position="165"/>
    </location>
</feature>
<feature type="compositionally biased region" description="Low complexity" evidence="5">
    <location>
        <begin position="402"/>
        <end position="418"/>
    </location>
</feature>
<feature type="compositionally biased region" description="Low complexity" evidence="5">
    <location>
        <begin position="960"/>
        <end position="969"/>
    </location>
</feature>
<feature type="compositionally biased region" description="Polar residues" evidence="5">
    <location>
        <begin position="1005"/>
        <end position="1015"/>
    </location>
</feature>
<feature type="compositionally biased region" description="Basic and acidic residues" evidence="5">
    <location>
        <begin position="1038"/>
        <end position="1053"/>
    </location>
</feature>
<feature type="compositionally biased region" description="Polar residues" evidence="5">
    <location>
        <begin position="1054"/>
        <end position="1082"/>
    </location>
</feature>
<feature type="compositionally biased region" description="Polar residues" evidence="5">
    <location>
        <begin position="1101"/>
        <end position="1111"/>
    </location>
</feature>
<feature type="active site" description="For protease activity; shared with dimeric partner" evidence="4">
    <location>
        <position position="461"/>
    </location>
</feature>
<feature type="binding site" evidence="3">
    <location>
        <position position="671"/>
    </location>
    <ligand>
        <name>Mg(2+)</name>
        <dbReference type="ChEBI" id="CHEBI:18420"/>
        <label>1</label>
        <note>catalytic; for integrase activity</note>
    </ligand>
</feature>
<feature type="binding site" evidence="3">
    <location>
        <position position="736"/>
    </location>
    <ligand>
        <name>Mg(2+)</name>
        <dbReference type="ChEBI" id="CHEBI:18420"/>
        <label>1</label>
        <note>catalytic; for integrase activity</note>
    </ligand>
</feature>
<feature type="binding site" evidence="3">
    <location>
        <position position="1346"/>
    </location>
    <ligand>
        <name>Mg(2+)</name>
        <dbReference type="ChEBI" id="CHEBI:18420"/>
        <label>2</label>
        <note>catalytic; for reverse transcriptase activity</note>
    </ligand>
</feature>
<feature type="binding site" evidence="3">
    <location>
        <position position="1427"/>
    </location>
    <ligand>
        <name>Mg(2+)</name>
        <dbReference type="ChEBI" id="CHEBI:18420"/>
        <label>2</label>
        <note>catalytic; for reverse transcriptase activity</note>
    </ligand>
</feature>
<feature type="binding site" evidence="3">
    <location>
        <position position="1428"/>
    </location>
    <ligand>
        <name>Mg(2+)</name>
        <dbReference type="ChEBI" id="CHEBI:18420"/>
        <label>2</label>
        <note>catalytic; for reverse transcriptase activity</note>
    </ligand>
</feature>
<feature type="binding site" evidence="3">
    <location>
        <position position="1610"/>
    </location>
    <ligand>
        <name>Mg(2+)</name>
        <dbReference type="ChEBI" id="CHEBI:18420"/>
        <label>3</label>
        <note>catalytic; for RNase H activity</note>
    </ligand>
</feature>
<feature type="binding site" evidence="3">
    <location>
        <position position="1652"/>
    </location>
    <ligand>
        <name>Mg(2+)</name>
        <dbReference type="ChEBI" id="CHEBI:18420"/>
        <label>3</label>
        <note>catalytic; for RNase H activity</note>
    </ligand>
</feature>
<feature type="binding site" evidence="3">
    <location>
        <position position="1685"/>
    </location>
    <ligand>
        <name>Mg(2+)</name>
        <dbReference type="ChEBI" id="CHEBI:18420"/>
        <label>3</label>
        <note>catalytic; for RNase H activity</note>
    </ligand>
</feature>
<feature type="site" description="Cleavage; by Ty1 protease" evidence="1">
    <location>
        <begin position="401"/>
        <end position="402"/>
    </location>
</feature>
<feature type="site" description="Cleavage; by Ty1 protease" evidence="1">
    <location>
        <begin position="582"/>
        <end position="583"/>
    </location>
</feature>
<feature type="site" description="Cleavage; by Ty1 protease" evidence="1">
    <location>
        <begin position="1217"/>
        <end position="1218"/>
    </location>
</feature>
<feature type="modified residue" description="Phosphoserine" evidence="2">
    <location>
        <position position="416"/>
    </location>
</feature>
<name>YJ11B_YEAST</name>
<protein>
    <recommendedName>
        <fullName>Transposon Ty1-JR1 Gag-Pol polyprotein</fullName>
    </recommendedName>
    <alternativeName>
        <fullName>Gag-Pol-p199</fullName>
    </alternativeName>
    <alternativeName>
        <fullName>TY1A-TY1B</fullName>
    </alternativeName>
    <alternativeName>
        <fullName>Transposon Ty1 TYA-TYB polyprotein</fullName>
    </alternativeName>
    <alternativeName>
        <fullName>p190</fullName>
    </alternativeName>
    <component>
        <recommendedName>
            <fullName>Capsid protein</fullName>
            <shortName>CA</shortName>
        </recommendedName>
        <alternativeName>
            <fullName>Gag-p45</fullName>
        </alternativeName>
        <alternativeName>
            <fullName>p54</fullName>
        </alternativeName>
    </component>
    <component>
        <recommendedName>
            <fullName>Ty1 protease</fullName>
            <shortName>PR</shortName>
            <ecNumber>3.4.23.-</ecNumber>
        </recommendedName>
        <alternativeName>
            <fullName>Pol-p20</fullName>
        </alternativeName>
        <alternativeName>
            <fullName>p23</fullName>
        </alternativeName>
    </component>
    <component>
        <recommendedName>
            <fullName>Integrase</fullName>
            <shortName>IN</shortName>
        </recommendedName>
        <alternativeName>
            <fullName>Pol-p71</fullName>
        </alternativeName>
        <alternativeName>
            <fullName>p84</fullName>
        </alternativeName>
        <alternativeName>
            <fullName>p90</fullName>
        </alternativeName>
    </component>
    <component>
        <recommendedName>
            <fullName>Reverse transcriptase/ribonuclease H</fullName>
            <shortName>RT</shortName>
            <shortName>RT-RH</shortName>
            <ecNumber>2.7.7.49</ecNumber>
            <ecNumber>2.7.7.7</ecNumber>
            <ecNumber>3.1.26.4</ecNumber>
        </recommendedName>
        <alternativeName>
            <fullName>Pol-p63</fullName>
        </alternativeName>
        <alternativeName>
            <fullName>p60</fullName>
        </alternativeName>
    </component>
</protein>
<keyword id="KW-0064">Aspartyl protease</keyword>
<keyword id="KW-0067">ATP-binding</keyword>
<keyword id="KW-0963">Cytoplasm</keyword>
<keyword id="KW-0229">DNA integration</keyword>
<keyword id="KW-0233">DNA recombination</keyword>
<keyword id="KW-0238">DNA-binding</keyword>
<keyword id="KW-0239">DNA-directed DNA polymerase</keyword>
<keyword id="KW-0255">Endonuclease</keyword>
<keyword id="KW-0378">Hydrolase</keyword>
<keyword id="KW-0460">Magnesium</keyword>
<keyword id="KW-0479">Metal-binding</keyword>
<keyword id="KW-0511">Multifunctional enzyme</keyword>
<keyword id="KW-0540">Nuclease</keyword>
<keyword id="KW-0547">Nucleotide-binding</keyword>
<keyword id="KW-0548">Nucleotidyltransferase</keyword>
<keyword id="KW-0539">Nucleus</keyword>
<keyword id="KW-0597">Phosphoprotein</keyword>
<keyword id="KW-0645">Protease</keyword>
<keyword id="KW-1185">Reference proteome</keyword>
<keyword id="KW-0688">Ribosomal frameshifting</keyword>
<keyword id="KW-0694">RNA-binding</keyword>
<keyword id="KW-0695">RNA-directed DNA polymerase</keyword>
<keyword id="KW-0808">Transferase</keyword>
<keyword id="KW-0814">Transposable element</keyword>
<keyword id="KW-0815">Transposition</keyword>
<keyword id="KW-1188">Viral release from host cell</keyword>
<keyword id="KW-0917">Virion maturation</keyword>
<keyword id="KW-0862">Zinc</keyword>
<keyword id="KW-0863">Zinc-finger</keyword>
<gene>
    <name type="primary">TY1B-JR1</name>
    <name type="synonym">YJRWTy1-1 POL</name>
    <name type="ordered locus">YJR027W</name>
    <name type="ORF">J1560</name>
</gene>
<comment type="function">
    <text evidence="1">Capsid protein (CA) is the structural component of the virus-like particle (VLP), forming the shell that encapsulates the retrotransposons dimeric RNA genome. The particles are assembled from trimer-clustered units and there are holes in the capsid shells that allow for the diffusion of macromolecules. CA also has nucleocapsid-like chaperone activity, promoting primer tRNA(i)-Met annealing to the multipartite primer-binding site (PBS), dimerization of Ty1 RNA and initiation of reverse transcription (By similarity).</text>
</comment>
<comment type="function">
    <text evidence="1">The aspartyl protease (PR) mediates the proteolytic cleavages of the Gag and Gag-Pol polyproteins after assembly of the VLP.</text>
</comment>
<comment type="function">
    <text evidence="1">Reverse transcriptase/ribonuclease H (RT) is a multifunctional enzyme that catalyzes the conversion of the retro-elements RNA genome into dsDNA within the VLP. The enzyme displays a DNA polymerase activity that can copy either DNA or RNA templates, and a ribonuclease H (RNase H) activity that cleaves the RNA strand of RNA-DNA heteroduplexes during plus-strand synthesis and hydrolyzes RNA primers. The conversion leads to a linear dsDNA copy of the retrotransposon that includes long terminal repeats (LTRs) at both ends (By similarity).</text>
</comment>
<comment type="function">
    <text evidence="1">Integrase (IN) targets the VLP to the nucleus, where a subparticle preintegration complex (PIC) containing at least integrase and the newly synthesized dsDNA copy of the retrotransposon must transit the nuclear membrane. Once in the nucleus, integrase performs the integration of the dsDNA into the host genome (By similarity).</text>
</comment>
<comment type="catalytic activity">
    <reaction>
        <text>DNA(n) + a 2'-deoxyribonucleoside 5'-triphosphate = DNA(n+1) + diphosphate</text>
        <dbReference type="Rhea" id="RHEA:22508"/>
        <dbReference type="Rhea" id="RHEA-COMP:17339"/>
        <dbReference type="Rhea" id="RHEA-COMP:17340"/>
        <dbReference type="ChEBI" id="CHEBI:33019"/>
        <dbReference type="ChEBI" id="CHEBI:61560"/>
        <dbReference type="ChEBI" id="CHEBI:173112"/>
        <dbReference type="EC" id="2.7.7.49"/>
    </reaction>
</comment>
<comment type="catalytic activity">
    <reaction>
        <text>DNA(n) + a 2'-deoxyribonucleoside 5'-triphosphate = DNA(n+1) + diphosphate</text>
        <dbReference type="Rhea" id="RHEA:22508"/>
        <dbReference type="Rhea" id="RHEA-COMP:17339"/>
        <dbReference type="Rhea" id="RHEA-COMP:17340"/>
        <dbReference type="ChEBI" id="CHEBI:33019"/>
        <dbReference type="ChEBI" id="CHEBI:61560"/>
        <dbReference type="ChEBI" id="CHEBI:173112"/>
        <dbReference type="EC" id="2.7.7.7"/>
    </reaction>
</comment>
<comment type="catalytic activity">
    <reaction>
        <text>Endonucleolytic cleavage to 5'-phosphomonoester.</text>
        <dbReference type="EC" id="3.1.26.4"/>
    </reaction>
</comment>
<comment type="subunit">
    <text evidence="1">The capsid protein forms a homotrimer, from which the VLPs are assembled. The protease is a homodimer, whose active site consists of two apposed aspartic acid residues (By similarity).</text>
</comment>
<comment type="subcellular location">
    <subcellularLocation>
        <location>Cytoplasm</location>
    </subcellularLocation>
    <subcellularLocation>
        <location evidence="1">Nucleus</location>
    </subcellularLocation>
</comment>
<comment type="alternative products">
    <event type="ribosomal frameshifting"/>
    <isoform>
        <id>P47098-1</id>
        <name>Transposon Ty1-JR1 Gag-Pol polyprotein</name>
        <sequence type="displayed"/>
    </isoform>
    <isoform>
        <id>P0CX74-1</id>
        <name>Transposon Ty1-JR1 Gag polyprotein</name>
        <sequence type="external"/>
    </isoform>
    <text evidence="1">The Gag-Pol polyprotein is generated by a +1 ribosomal frameshift. The ratio of Gag:Gag-Pol varies between 20:1 and 5:1 (By similarity).</text>
</comment>
<comment type="domain">
    <text evidence="1">The C-terminal RNA-binding region of CA is sufficient for all its nucleocapsid-like chaperone activities.</text>
</comment>
<comment type="domain">
    <text evidence="1">Integrase core domain contains the D-x(n)-D-x(35)-E motif, named for the phylogenetically conserved glutamic acid and aspartic acid residues and the invariant 35 amino acid spacing between the second and third acidic residues. Each acidic residue of the D,D(35)E motif is independently essential for the 3'-processing and strand transfer activities of purified integrase protein (By similarity).</text>
</comment>
<comment type="PTM">
    <text evidence="1">Initially, virus-like particles (VLPs) are composed of the structural unprocessed proteins Gag and Gag-Pol, and also contain the host initiator methionine tRNA (tRNA(i)-Met) which serves as a primer for minus-strand DNA synthesis, and a dimer of genomic Ty RNA. Processing of the polyproteins occurs within the particle and proceeds by an ordered pathway, called maturation. First, the protease (PR) is released by autocatalytic cleavage of the Gag-Pol polyprotein yielding capsid protein p45 and a Pol-p154 precursor protein. This cleavage is a prerequisite for subsequent processing of Pol-p154 at the remaining sites to release the mature structural and catalytic proteins. Maturation takes place prior to the RT reaction and is required to produce transposition-competent VLPs (By similarity).</text>
</comment>
<comment type="miscellaneous">
    <text>Retrotransposons are mobile genetic entities that are able to replicate via an RNA intermediate and a reverse transcription step. In contrast to retroviruses, retrotransposons are non-infectious, lack an envelope and remain intracellular. Ty1 retrotransposons belong to the copia elements (pseudoviridae).</text>
</comment>
<comment type="miscellaneous">
    <molecule>Isoform Transposon Ty1-JR1 Gag-Pol polyprotein</molecule>
    <text>Produced by +1 ribosomal frameshifting between codon Leu-435 and Gly-436 of the YJR026W ORF.</text>
</comment>
<comment type="sequence caution" evidence="6">
    <conflict type="erroneous gene model prediction">
        <sequence resource="EMBL-CDS" id="CAA89553"/>
    </conflict>
</comment>
<evidence type="ECO:0000250" key="1"/>
<evidence type="ECO:0000250" key="2">
    <source>
        <dbReference type="UniProtKB" id="Q99231"/>
    </source>
</evidence>
<evidence type="ECO:0000255" key="3">
    <source>
        <dbReference type="PROSITE-ProRule" id="PRU00457"/>
    </source>
</evidence>
<evidence type="ECO:0000255" key="4">
    <source>
        <dbReference type="PROSITE-ProRule" id="PRU10094"/>
    </source>
</evidence>
<evidence type="ECO:0000256" key="5">
    <source>
        <dbReference type="SAM" id="MobiDB-lite"/>
    </source>
</evidence>
<evidence type="ECO:0000305" key="6"/>
<reference key="1">
    <citation type="journal article" date="1995" name="Yeast">
        <title>The sequence of 24.3 kb from chromosome X reveals five complete open reading frames, all of which correspond to new genes, and a tandem insertion of a Ty1 transposon.</title>
        <authorList>
            <person name="Zagulski M."/>
            <person name="Babinska B."/>
            <person name="Gromadka R."/>
            <person name="Migdalski A."/>
            <person name="Rytka J."/>
            <person name="Sulicka J."/>
            <person name="Herbert C.J."/>
        </authorList>
    </citation>
    <scope>NUCLEOTIDE SEQUENCE [GENOMIC DNA]</scope>
</reference>
<reference key="2">
    <citation type="journal article" date="1996" name="EMBO J.">
        <title>Complete nucleotide sequence of Saccharomyces cerevisiae chromosome X.</title>
        <authorList>
            <person name="Galibert F."/>
            <person name="Alexandraki D."/>
            <person name="Baur A."/>
            <person name="Boles E."/>
            <person name="Chalwatzis N."/>
            <person name="Chuat J.-C."/>
            <person name="Coster F."/>
            <person name="Cziepluch C."/>
            <person name="de Haan M."/>
            <person name="Domdey H."/>
            <person name="Durand P."/>
            <person name="Entian K.-D."/>
            <person name="Gatius M."/>
            <person name="Goffeau A."/>
            <person name="Grivell L.A."/>
            <person name="Hennemann A."/>
            <person name="Herbert C.J."/>
            <person name="Heumann K."/>
            <person name="Hilger F."/>
            <person name="Hollenberg C.P."/>
            <person name="Huang M.-E."/>
            <person name="Jacq C."/>
            <person name="Jauniaux J.-C."/>
            <person name="Katsoulou C."/>
            <person name="Kirchrath L."/>
            <person name="Kleine K."/>
            <person name="Kordes E."/>
            <person name="Koetter P."/>
            <person name="Liebl S."/>
            <person name="Louis E.J."/>
            <person name="Manus V."/>
            <person name="Mewes H.-W."/>
            <person name="Miosga T."/>
            <person name="Obermaier B."/>
            <person name="Perea J."/>
            <person name="Pohl T.M."/>
            <person name="Portetelle D."/>
            <person name="Pujol A."/>
            <person name="Purnelle B."/>
            <person name="Ramezani Rad M."/>
            <person name="Rasmussen S.W."/>
            <person name="Rose M."/>
            <person name="Rossau R."/>
            <person name="Schaaff-Gerstenschlaeger I."/>
            <person name="Smits P.H.M."/>
            <person name="Scarcez T."/>
            <person name="Soriano N."/>
            <person name="To Van D."/>
            <person name="Tzermia M."/>
            <person name="Van Broekhoven A."/>
            <person name="Vandenbol M."/>
            <person name="Wedler H."/>
            <person name="von Wettstein D."/>
            <person name="Wambutt R."/>
            <person name="Zagulski M."/>
            <person name="Zollner A."/>
            <person name="Karpfinger-Hartl L."/>
        </authorList>
    </citation>
    <scope>NUCLEOTIDE SEQUENCE [LARGE SCALE GENOMIC DNA]</scope>
    <source>
        <strain>ATCC 204508 / S288c</strain>
    </source>
</reference>
<reference key="3">
    <citation type="journal article" date="2014" name="G3 (Bethesda)">
        <title>The reference genome sequence of Saccharomyces cerevisiae: Then and now.</title>
        <authorList>
            <person name="Engel S.R."/>
            <person name="Dietrich F.S."/>
            <person name="Fisk D.G."/>
            <person name="Binkley G."/>
            <person name="Balakrishnan R."/>
            <person name="Costanzo M.C."/>
            <person name="Dwight S.S."/>
            <person name="Hitz B.C."/>
            <person name="Karra K."/>
            <person name="Nash R.S."/>
            <person name="Weng S."/>
            <person name="Wong E.D."/>
            <person name="Lloyd P."/>
            <person name="Skrzypek M.S."/>
            <person name="Miyasato S.R."/>
            <person name="Simison M."/>
            <person name="Cherry J.M."/>
        </authorList>
    </citation>
    <scope>GENOME REANNOTATION</scope>
    <source>
        <strain>ATCC 204508 / S288c</strain>
    </source>
</reference>
<reference key="4">
    <citation type="journal article" date="1998" name="Genome Res.">
        <title>Transposable elements and genome organization: a comprehensive survey of retrotransposons revealed by the complete Saccharomyces cerevisiae genome sequence.</title>
        <authorList>
            <person name="Kim J.M."/>
            <person name="Vanguri S."/>
            <person name="Boeke J.D."/>
            <person name="Gabriel A."/>
            <person name="Voytas D.F."/>
        </authorList>
    </citation>
    <scope>NOMENCLATURE</scope>
</reference>
<reference key="5">
    <citation type="journal article" date="2005" name="Cytogenet. Genome Res.">
        <title>Happy together: the life and times of Ty retrotransposons and their hosts.</title>
        <authorList>
            <person name="Lesage P."/>
            <person name="Todeschini A.L."/>
        </authorList>
    </citation>
    <scope>REVIEW</scope>
</reference>
<reference key="6">
    <citation type="journal article" date="2005" name="Cytogenet. Genome Res.">
        <title>Reverse transcriptase and integrase of the Saccharomyces cerevisiae Ty1 element.</title>
        <authorList>
            <person name="Wilhelm F.-X."/>
            <person name="Wilhelm M."/>
            <person name="Gabriel A."/>
        </authorList>
    </citation>
    <scope>REVIEW</scope>
    <scope>DOMAINS</scope>
</reference>
<sequence length="1755" mass="198652">MESQQLSQHSHISHGSACASVTSKEVHTNQDPLDVSASKTEECEKASTKANSQQTTTPASSAVPENPHHASPQPASVPPPQNGPYPQQCMMTQNQANPSGWSFYGHPSMIPYTPYQMSPMYFPPGPQSQFPQYPSSVGTPLSTPSPESGNTFTDSSSADSDMTSTKKYVRPPPMLTSPNDFPNWVKTYIKFLQNSNLGGIIPTVNGKPVRQITDDELTFLYNTFQIFAPSQFLPTWVKDILSVDYTDIMKILSKSIEKMQSDTQEANDIVTLANLQYNGSTPADAFETKVTNIIDRLNNNGIHINNKVACQLIMRGLSGEYKFLRYTRHRHLNMTVAELFLDIHAIYEEQQGSRNSKPNYRRNLSDEKNDSRSYTNTTKPKVIARNPQKTNNSKSKTARAHNVSTSNNSPSTDNDSISKSTTEPIQLNNKHDLHLGQELTESTVNHTNHSDDELPGHLLLDSGASRTLIRSAHHIHSASSNPDINVVDAQKRNIPINAIGDLQFHFQDNTKTSIKVLHTPNIAYDLLSLNELAAVDITACFTKNVLERSDGTVLAPIVQYGDFYWVSKRYLLPSNISVPTINNVHTSESTRKYPYPFIHRMLAHANAQTIRYSLKNNTITYFNESDVDWSSAIDYQCPDCLIGKSTKHRHIKGSRLKYQNSYEPFQYLHTDIFGPVHNLPKSAPSYFISFTDETTKFRWVYPLHDRREDSILDVFTTILAFIKNQFQASVLVIQMDRGSEYTNRTLHKFLEKNGITPCYTTTADSRAHGVAERLNRTLLDDCRTQLQCSGLPNHLWFSAIEFSTIVRNSLASPKSKKSARQHAGLAGLDISTLLPFGQPVIVNDHNPNSKIHPRGIPGYALHPSRNSYGYIIYLPSLKKTVDTTNYVILQGKESRLDQFNYDALTFDEDLNRLTASYQSFIASNEIQESNDLNIESDHDFQSDIELHPEQPRNVLSKAVSPTDSTPPSTHTEDSKRVSKTNIRAPREVDPNISESNILPSKKRSSTPQISNIESTGSGGMHKLNVPLLAPMSQSNTHESSHASKSKDFRHSDSYSENETNHTNVPISSTGGTNNKTVPQISDQETEKRIIHRSPSIDASPPENNSSHNIVPIKTPTTVSEQNTEESIIADLPLPDLPPESPTEFPDPFKELPPINSHQTNSSLGGIGDSNAYTTINSKKRSLEDNETEIKVSRDTWNTKNMRSLEPPRSKKRIHLIAAVKAVKSIKPIRTTLRYDEAITYNKDIKEKEKYIEAYHKEVNQLLKMKTWDTDEYYDRKEIDPKRVINSMFIFNKKRDGTHKARFVARGDIQHPDTYDTGMQSNTVHHYALMTSLSLALDNNYYITQLDISSAYLYADIKEELYIRPPPHLGMNDKLIRLKKSHYGLKQSGANWYETIKSYLIKQCGMEEVRGWSCVFKNSQVTICLFVDDMILFSKDLNANKKIITTLKKQYDTKIINLGESDNEIQYDILGLEIKYQRGKYMKLGMENSLTEKIPKLNVPLNPKGRKLSAPGQPGLYIDQDELEIDEDEYKEKVHEMQKLIGLASYVGYKFRFDLLYYINTLAQHILFPSRQVLDMTYELIQFMWDTRDKQLIWHKNKPTEPDNKLVAISDASYGNQPYYKSQIGNIFLLNGKVIGGKSTKASLTCTSTTEAEIHAISESVPLLNNLSYLIQELNKKPIIKGLLTDSRSTISIIKSTNEEKFRNRFFGTKAMRLRDEVSGNNLYVYYIETKKNIADVMTKPLPIKTFKLLTNKWIH</sequence>
<proteinExistence type="inferred from homology"/>
<dbReference type="EC" id="3.4.23.-"/>
<dbReference type="EC" id="2.7.7.49"/>
<dbReference type="EC" id="2.7.7.7"/>
<dbReference type="EC" id="3.1.26.4"/>
<dbReference type="EMBL" id="X87297">
    <property type="status" value="NOT_ANNOTATED_CDS"/>
    <property type="molecule type" value="Genomic_DNA"/>
</dbReference>
<dbReference type="EMBL" id="Z49526">
    <property type="protein sequence ID" value="CAA89553.1"/>
    <property type="status" value="ALT_SEQ"/>
    <property type="molecule type" value="Genomic_DNA"/>
</dbReference>
<dbReference type="EMBL" id="BK006943">
    <property type="protein sequence ID" value="DAA08815.1"/>
    <property type="molecule type" value="Genomic_DNA"/>
</dbReference>
<dbReference type="PIR" id="S57045">
    <property type="entry name" value="S57045"/>
</dbReference>
<dbReference type="RefSeq" id="NP_012560.1">
    <molecule id="P47098-1"/>
    <property type="nucleotide sequence ID" value="NM_001181685.2"/>
</dbReference>
<dbReference type="SMR" id="P47098"/>
<dbReference type="BioGRID" id="33780">
    <property type="interactions" value="13"/>
</dbReference>
<dbReference type="DIP" id="DIP-6367N"/>
<dbReference type="FunCoup" id="P47098">
    <property type="interactions" value="113"/>
</dbReference>
<dbReference type="IntAct" id="P47098">
    <property type="interactions" value="5"/>
</dbReference>
<dbReference type="GlyGen" id="P47098">
    <property type="glycosylation" value="3 sites"/>
</dbReference>
<dbReference type="iPTMnet" id="P47098"/>
<dbReference type="PaxDb" id="4932-YJR027W"/>
<dbReference type="PeptideAtlas" id="P47098"/>
<dbReference type="GeneID" id="853484"/>
<dbReference type="KEGG" id="sce:YJR027W"/>
<dbReference type="AGR" id="SGD:S000003788"/>
<dbReference type="SGD" id="S000003788">
    <property type="gene designation" value="YJR027W"/>
</dbReference>
<dbReference type="VEuPathDB" id="FungiDB:YJR027W"/>
<dbReference type="eggNOG" id="KOG0017">
    <property type="taxonomic scope" value="Eukaryota"/>
</dbReference>
<dbReference type="HOGENOM" id="CLU_244151_0_0_1"/>
<dbReference type="InParanoid" id="P47098"/>
<dbReference type="OrthoDB" id="5423336at2759"/>
<dbReference type="Proteomes" id="UP000002311">
    <property type="component" value="Chromosome X"/>
</dbReference>
<dbReference type="RNAct" id="P47098">
    <property type="molecule type" value="protein"/>
</dbReference>
<dbReference type="GO" id="GO:0005737">
    <property type="term" value="C:cytoplasm"/>
    <property type="evidence" value="ECO:0007669"/>
    <property type="project" value="UniProtKB-SubCell"/>
</dbReference>
<dbReference type="GO" id="GO:0005634">
    <property type="term" value="C:nucleus"/>
    <property type="evidence" value="ECO:0000314"/>
    <property type="project" value="SGD"/>
</dbReference>
<dbReference type="GO" id="GO:0004190">
    <property type="term" value="F:aspartic-type endopeptidase activity"/>
    <property type="evidence" value="ECO:0007669"/>
    <property type="project" value="UniProtKB-KW"/>
</dbReference>
<dbReference type="GO" id="GO:0005524">
    <property type="term" value="F:ATP binding"/>
    <property type="evidence" value="ECO:0007669"/>
    <property type="project" value="UniProtKB-KW"/>
</dbReference>
<dbReference type="GO" id="GO:0003677">
    <property type="term" value="F:DNA binding"/>
    <property type="evidence" value="ECO:0007669"/>
    <property type="project" value="UniProtKB-KW"/>
</dbReference>
<dbReference type="GO" id="GO:0003887">
    <property type="term" value="F:DNA-directed DNA polymerase activity"/>
    <property type="evidence" value="ECO:0007669"/>
    <property type="project" value="UniProtKB-KW"/>
</dbReference>
<dbReference type="GO" id="GO:0003723">
    <property type="term" value="F:RNA binding"/>
    <property type="evidence" value="ECO:0007669"/>
    <property type="project" value="UniProtKB-KW"/>
</dbReference>
<dbReference type="GO" id="GO:0003964">
    <property type="term" value="F:RNA-directed DNA polymerase activity"/>
    <property type="evidence" value="ECO:0007669"/>
    <property type="project" value="UniProtKB-KW"/>
</dbReference>
<dbReference type="GO" id="GO:0004523">
    <property type="term" value="F:RNA-DNA hybrid ribonuclease activity"/>
    <property type="evidence" value="ECO:0007669"/>
    <property type="project" value="UniProtKB-EC"/>
</dbReference>
<dbReference type="GO" id="GO:0008270">
    <property type="term" value="F:zinc ion binding"/>
    <property type="evidence" value="ECO:0007669"/>
    <property type="project" value="UniProtKB-KW"/>
</dbReference>
<dbReference type="GO" id="GO:0015074">
    <property type="term" value="P:DNA integration"/>
    <property type="evidence" value="ECO:0007669"/>
    <property type="project" value="UniProtKB-KW"/>
</dbReference>
<dbReference type="GO" id="GO:0006310">
    <property type="term" value="P:DNA recombination"/>
    <property type="evidence" value="ECO:0007669"/>
    <property type="project" value="UniProtKB-KW"/>
</dbReference>
<dbReference type="GO" id="GO:0006508">
    <property type="term" value="P:proteolysis"/>
    <property type="evidence" value="ECO:0007669"/>
    <property type="project" value="UniProtKB-KW"/>
</dbReference>
<dbReference type="GO" id="GO:0032196">
    <property type="term" value="P:transposition"/>
    <property type="evidence" value="ECO:0007669"/>
    <property type="project" value="UniProtKB-KW"/>
</dbReference>
<dbReference type="GO" id="GO:0075523">
    <property type="term" value="P:viral translational frameshifting"/>
    <property type="evidence" value="ECO:0007669"/>
    <property type="project" value="UniProtKB-KW"/>
</dbReference>
<dbReference type="CDD" id="cd09272">
    <property type="entry name" value="RNase_HI_RT_Ty1"/>
    <property type="match status" value="1"/>
</dbReference>
<dbReference type="FunFam" id="3.30.420.10:FF:000050">
    <property type="entry name" value="Transposon Ty2-DR3 Gag-Pol polyprotein"/>
    <property type="match status" value="1"/>
</dbReference>
<dbReference type="Gene3D" id="3.30.420.10">
    <property type="entry name" value="Ribonuclease H-like superfamily/Ribonuclease H"/>
    <property type="match status" value="1"/>
</dbReference>
<dbReference type="InterPro" id="IPR001969">
    <property type="entry name" value="Aspartic_peptidase_AS"/>
</dbReference>
<dbReference type="InterPro" id="IPR043502">
    <property type="entry name" value="DNA/RNA_pol_sf"/>
</dbReference>
<dbReference type="InterPro" id="IPR001584">
    <property type="entry name" value="Integrase_cat-core"/>
</dbReference>
<dbReference type="InterPro" id="IPR039537">
    <property type="entry name" value="Retrotran_Ty1/copia-like"/>
</dbReference>
<dbReference type="InterPro" id="IPR012337">
    <property type="entry name" value="RNaseH-like_sf"/>
</dbReference>
<dbReference type="InterPro" id="IPR036397">
    <property type="entry name" value="RNaseH_sf"/>
</dbReference>
<dbReference type="InterPro" id="IPR013103">
    <property type="entry name" value="RVT_2"/>
</dbReference>
<dbReference type="InterPro" id="IPR015820">
    <property type="entry name" value="TYA"/>
</dbReference>
<dbReference type="PANTHER" id="PTHR42648">
    <property type="entry name" value="TRANSPOSASE, PUTATIVE-RELATED"/>
    <property type="match status" value="1"/>
</dbReference>
<dbReference type="PANTHER" id="PTHR42648:SF11">
    <property type="entry name" value="TRANSPOSON TY4-P GAG-POL POLYPROTEIN"/>
    <property type="match status" value="1"/>
</dbReference>
<dbReference type="Pfam" id="PF00665">
    <property type="entry name" value="rve"/>
    <property type="match status" value="1"/>
</dbReference>
<dbReference type="Pfam" id="PF07727">
    <property type="entry name" value="RVT_2"/>
    <property type="match status" value="1"/>
</dbReference>
<dbReference type="Pfam" id="PF01021">
    <property type="entry name" value="TYA"/>
    <property type="match status" value="1"/>
</dbReference>
<dbReference type="SUPFAM" id="SSF56672">
    <property type="entry name" value="DNA/RNA polymerases"/>
    <property type="match status" value="1"/>
</dbReference>
<dbReference type="SUPFAM" id="SSF53098">
    <property type="entry name" value="Ribonuclease H-like"/>
    <property type="match status" value="1"/>
</dbReference>
<dbReference type="PROSITE" id="PS00141">
    <property type="entry name" value="ASP_PROTEASE"/>
    <property type="match status" value="1"/>
</dbReference>
<dbReference type="PROSITE" id="PS50994">
    <property type="entry name" value="INTEGRASE"/>
    <property type="match status" value="1"/>
</dbReference>